<protein>
    <recommendedName>
        <fullName>Isocitrate dehydrogenase [NAD] subunit gamma, mitochondrial</fullName>
    </recommendedName>
    <alternativeName>
        <fullName>Isocitric dehydrogenase subunit gamma</fullName>
    </alternativeName>
    <alternativeName>
        <fullName>NAD(+)-specific ICDH subunit gamma</fullName>
    </alternativeName>
</protein>
<comment type="function">
    <text evidence="1">Regulatory subunit which plays a role in the allosteric regulation of the enzyme catalyzing the decarboxylation of isocitrate (ICT) into alpha-ketoglutarate. The heterodimer composed of the alpha (IDH3A) and beta (IDH3B) subunits and the heterodimer composed of the alpha (IDH3A) and gamma (IDH3G) subunits, have considerable basal activity but the full activity of the heterotetramer (containing two subunits of IDH3A, one of IDH3B and one of IDH3G) requires the assembly and cooperative function of both heterodimers.</text>
</comment>
<comment type="activity regulation">
    <text evidence="1">The heterotetramer and the heterodimer composed of IDH3A and IDH3G subunits can be allosterically activated by citrate (CIT) or/and ADP, and the two activators can act independently or synergistically. The heterodimer composed of IDH3A and IDH3B subunits cannot be allosterically regulated and the allosteric regulation of the heterotetramer is through the IDH3G subunit and not the IDH3B subunit. The IDH3G subunit contains the allosteric site which consists of a CIT-binding site and an ADP-binding site, and the binding of CIT and ADP causes conformational changes at the allosteric site which are transmitted to the active site in the catalytic subunit (IDH3A) through a cascade of conformational changes at the heterodimer interface, leading to stabilization of the isocitrate-binding at the active site and thus activation of the enzyme. ATP can activate the heterotetramer and the heterodimer composed of IDH3A and IDH3G subunits at low concentrations but inhibits their activities at high concentrations, whereas ATP exhibits only inhibitory effect on the heterodimer composed of IDH3A and IDH3B subunits.</text>
</comment>
<comment type="subunit">
    <text evidence="1">Heterooligomer of subunits alpha (IDH3A), beta (IDH3B), and gamma (IDH3G) in the apparent ratio of 2:1:1. The heterodimer containing one IDH3A and one IDH3B subunit and the heterodimer containing one IDH3A and one IDH3G subunit assemble into a heterotetramer (which contains two subunits of IDH3A, one of IDH3B and one of IDH3G) and further into the heterooctamer.</text>
</comment>
<comment type="subcellular location">
    <subcellularLocation>
        <location>Mitochondrion</location>
    </subcellularLocation>
</comment>
<comment type="similarity">
    <text evidence="2">Belongs to the isocitrate and isopropylmalate dehydrogenases family.</text>
</comment>
<sequence length="106" mass="11334">FSQQTIPPSAKYGGILTVTMSPGDGDGPELMLTVXXXXXSACVPVDFEEVVVSSNADEEDIRTSLDLYANVIHCKLGDGLFLQCCKNIANPTATLLASCMMLDHLK</sequence>
<proteinExistence type="evidence at protein level"/>
<keyword id="KW-0903">Direct protein sequencing</keyword>
<keyword id="KW-0496">Mitochondrion</keyword>
<keyword id="KW-1185">Reference proteome</keyword>
<keyword id="KW-0816">Tricarboxylic acid cycle</keyword>
<dbReference type="PIR" id="C35834">
    <property type="entry name" value="C35834"/>
</dbReference>
<dbReference type="STRING" id="9823.ENSSSCP00000062175"/>
<dbReference type="PaxDb" id="9823-ENSSSCP00000013592"/>
<dbReference type="PeptideAtlas" id="P41566"/>
<dbReference type="eggNOG" id="KOG0784">
    <property type="taxonomic scope" value="Eukaryota"/>
</dbReference>
<dbReference type="InParanoid" id="P41566"/>
<dbReference type="SABIO-RK" id="P41566"/>
<dbReference type="Proteomes" id="UP000008227">
    <property type="component" value="Unplaced"/>
</dbReference>
<dbReference type="Proteomes" id="UP000314985">
    <property type="component" value="Unplaced"/>
</dbReference>
<dbReference type="Proteomes" id="UP000694570">
    <property type="component" value="Unplaced"/>
</dbReference>
<dbReference type="Proteomes" id="UP000694571">
    <property type="component" value="Unplaced"/>
</dbReference>
<dbReference type="Proteomes" id="UP000694720">
    <property type="component" value="Unplaced"/>
</dbReference>
<dbReference type="Proteomes" id="UP000694722">
    <property type="component" value="Unplaced"/>
</dbReference>
<dbReference type="Proteomes" id="UP000694723">
    <property type="component" value="Unplaced"/>
</dbReference>
<dbReference type="Proteomes" id="UP000694724">
    <property type="component" value="Unplaced"/>
</dbReference>
<dbReference type="Proteomes" id="UP000694725">
    <property type="component" value="Unplaced"/>
</dbReference>
<dbReference type="Proteomes" id="UP000694726">
    <property type="component" value="Unplaced"/>
</dbReference>
<dbReference type="Proteomes" id="UP000694727">
    <property type="component" value="Unplaced"/>
</dbReference>
<dbReference type="Proteomes" id="UP000694728">
    <property type="component" value="Unplaced"/>
</dbReference>
<dbReference type="GO" id="GO:0005739">
    <property type="term" value="C:mitochondrion"/>
    <property type="evidence" value="ECO:0000314"/>
    <property type="project" value="UniProtKB"/>
</dbReference>
<dbReference type="GO" id="GO:0008047">
    <property type="term" value="F:enzyme activator activity"/>
    <property type="evidence" value="ECO:0000314"/>
    <property type="project" value="FlyBase"/>
</dbReference>
<dbReference type="GO" id="GO:0004449">
    <property type="term" value="F:isocitrate dehydrogenase (NAD+) activity"/>
    <property type="evidence" value="ECO:0000315"/>
    <property type="project" value="UniProtKB"/>
</dbReference>
<dbReference type="GO" id="GO:0000287">
    <property type="term" value="F:magnesium ion binding"/>
    <property type="evidence" value="ECO:0000250"/>
    <property type="project" value="UniProtKB"/>
</dbReference>
<dbReference type="GO" id="GO:0006102">
    <property type="term" value="P:isocitrate metabolic process"/>
    <property type="evidence" value="ECO:0000315"/>
    <property type="project" value="UniProtKB"/>
</dbReference>
<dbReference type="GO" id="GO:0006099">
    <property type="term" value="P:tricarboxylic acid cycle"/>
    <property type="evidence" value="ECO:0007669"/>
    <property type="project" value="UniProtKB-KW"/>
</dbReference>
<dbReference type="PANTHER" id="PTHR11835">
    <property type="entry name" value="DECARBOXYLATING DEHYDROGENASES-ISOCITRATE, ISOPROPYLMALATE, TARTRATE"/>
    <property type="match status" value="1"/>
</dbReference>
<dbReference type="PANTHER" id="PTHR11835:SF78">
    <property type="entry name" value="ISOCITRATE DEHYDROGENASE [NAD] SUBUNIT GAMMA, MITOCHONDRIAL"/>
    <property type="match status" value="1"/>
</dbReference>
<dbReference type="SUPFAM" id="SSF53659">
    <property type="entry name" value="Isocitrate/Isopropylmalate dehydrogenase-like"/>
    <property type="match status" value="1"/>
</dbReference>
<feature type="chain" id="PRO_0000083592" description="Isocitrate dehydrogenase [NAD] subunit gamma, mitochondrial">
    <location>
        <begin position="1"/>
        <end position="106" status="greater than"/>
    </location>
</feature>
<feature type="non-consecutive residues" evidence="2">
    <location>
        <begin position="62"/>
        <end position="63"/>
    </location>
</feature>
<feature type="non-consecutive residues" evidence="2">
    <location>
        <begin position="75"/>
        <end position="76"/>
    </location>
</feature>
<feature type="non-consecutive residues" evidence="2">
    <location>
        <begin position="86"/>
        <end position="87"/>
    </location>
</feature>
<feature type="non-terminal residue">
    <location>
        <position position="106"/>
    </location>
</feature>
<name>IDH3G_PIG</name>
<reference key="1">
    <citation type="journal article" date="1990" name="Biochemistry">
        <title>Subunit location and sequences of the cysteinyl peptides of pig heart NAD-dependent isocitrate dehydrogenase.</title>
        <authorList>
            <person name="Huang Y.C."/>
            <person name="Colman R.F."/>
        </authorList>
    </citation>
    <scope>PROTEIN SEQUENCE</scope>
    <source>
        <tissue>Heart</tissue>
    </source>
</reference>
<reference key="2">
    <citation type="journal article" date="1989" name="Biochemistry">
        <title>Cysteinyl peptide labeled by 3-bromo-2-ketoglutarate in the active site of pig heart NAD+-dependent isocitrate dehydrogenase.</title>
        <authorList>
            <person name="Saha A."/>
            <person name="Huang Y.C."/>
            <person name="Colman R.F."/>
        </authorList>
    </citation>
    <scope>PROTEIN SEQUENCE OF 40-62</scope>
    <source>
        <tissue>Heart</tissue>
    </source>
</reference>
<reference key="3">
    <citation type="journal article" date="1989" name="J. Biol. Chem.">
        <title>Aspartyl peptide labeled by 2-(4-bromo-2,3-dioxobutylthio)adenosine 5'-diphosphate in the allosteric ADP site of pig heart NAD+-dependent isocitrate dehydrogenase.</title>
        <authorList>
            <person name="Huang Y.C."/>
            <person name="Colman R.F."/>
        </authorList>
    </citation>
    <scope>PROTEIN SEQUENCE OF 76-86</scope>
    <source>
        <tissue>Heart</tissue>
    </source>
</reference>
<accession>P41566</accession>
<organism>
    <name type="scientific">Sus scrofa</name>
    <name type="common">Pig</name>
    <dbReference type="NCBI Taxonomy" id="9823"/>
    <lineage>
        <taxon>Eukaryota</taxon>
        <taxon>Metazoa</taxon>
        <taxon>Chordata</taxon>
        <taxon>Craniata</taxon>
        <taxon>Vertebrata</taxon>
        <taxon>Euteleostomi</taxon>
        <taxon>Mammalia</taxon>
        <taxon>Eutheria</taxon>
        <taxon>Laurasiatheria</taxon>
        <taxon>Artiodactyla</taxon>
        <taxon>Suina</taxon>
        <taxon>Suidae</taxon>
        <taxon>Sus</taxon>
    </lineage>
</organism>
<evidence type="ECO:0000250" key="1">
    <source>
        <dbReference type="UniProtKB" id="P51553"/>
    </source>
</evidence>
<evidence type="ECO:0000305" key="2"/>
<gene>
    <name type="primary">IDH3G</name>
</gene>